<dbReference type="EC" id="2.1.1.190" evidence="1"/>
<dbReference type="EMBL" id="CP000437">
    <property type="protein sequence ID" value="ABI83287.1"/>
    <property type="molecule type" value="Genomic_DNA"/>
</dbReference>
<dbReference type="RefSeq" id="WP_003016867.1">
    <property type="nucleotide sequence ID" value="NC_017463.1"/>
</dbReference>
<dbReference type="SMR" id="Q0BKU7"/>
<dbReference type="KEGG" id="fth:FTH_1481"/>
<dbReference type="GO" id="GO:0051539">
    <property type="term" value="F:4 iron, 4 sulfur cluster binding"/>
    <property type="evidence" value="ECO:0007669"/>
    <property type="project" value="UniProtKB-KW"/>
</dbReference>
<dbReference type="GO" id="GO:0005506">
    <property type="term" value="F:iron ion binding"/>
    <property type="evidence" value="ECO:0007669"/>
    <property type="project" value="UniProtKB-UniRule"/>
</dbReference>
<dbReference type="GO" id="GO:0003723">
    <property type="term" value="F:RNA binding"/>
    <property type="evidence" value="ECO:0007669"/>
    <property type="project" value="InterPro"/>
</dbReference>
<dbReference type="GO" id="GO:0070041">
    <property type="term" value="F:rRNA (uridine-C5-)-methyltransferase activity"/>
    <property type="evidence" value="ECO:0007669"/>
    <property type="project" value="UniProtKB-UniRule"/>
</dbReference>
<dbReference type="GO" id="GO:0070475">
    <property type="term" value="P:rRNA base methylation"/>
    <property type="evidence" value="ECO:0007669"/>
    <property type="project" value="TreeGrafter"/>
</dbReference>
<dbReference type="CDD" id="cd02440">
    <property type="entry name" value="AdoMet_MTases"/>
    <property type="match status" value="1"/>
</dbReference>
<dbReference type="FunFam" id="2.40.50.140:FF:000097">
    <property type="entry name" value="23S rRNA (uracil(1939)-C(5))-methyltransferase RlmD"/>
    <property type="match status" value="1"/>
</dbReference>
<dbReference type="Gene3D" id="2.40.50.1070">
    <property type="match status" value="1"/>
</dbReference>
<dbReference type="Gene3D" id="2.40.50.140">
    <property type="entry name" value="Nucleic acid-binding proteins"/>
    <property type="match status" value="1"/>
</dbReference>
<dbReference type="Gene3D" id="3.40.50.150">
    <property type="entry name" value="Vaccinia Virus protein VP39"/>
    <property type="match status" value="1"/>
</dbReference>
<dbReference type="HAMAP" id="MF_01010">
    <property type="entry name" value="23SrRNA_methyltr_RlmD"/>
    <property type="match status" value="1"/>
</dbReference>
<dbReference type="InterPro" id="IPR001566">
    <property type="entry name" value="23S_rRNA_MeTrfase_RlmD"/>
</dbReference>
<dbReference type="InterPro" id="IPR030391">
    <property type="entry name" value="MeTrfase_TrmA_CS"/>
</dbReference>
<dbReference type="InterPro" id="IPR012340">
    <property type="entry name" value="NA-bd_OB-fold"/>
</dbReference>
<dbReference type="InterPro" id="IPR029063">
    <property type="entry name" value="SAM-dependent_MTases_sf"/>
</dbReference>
<dbReference type="InterPro" id="IPR002792">
    <property type="entry name" value="TRAM_dom"/>
</dbReference>
<dbReference type="InterPro" id="IPR010280">
    <property type="entry name" value="U5_MeTrfase_fam"/>
</dbReference>
<dbReference type="NCBIfam" id="NF009639">
    <property type="entry name" value="PRK13168.1"/>
    <property type="match status" value="1"/>
</dbReference>
<dbReference type="NCBIfam" id="TIGR00479">
    <property type="entry name" value="rumA"/>
    <property type="match status" value="1"/>
</dbReference>
<dbReference type="PANTHER" id="PTHR11061:SF49">
    <property type="entry name" value="23S RRNA (URACIL(1939)-C(5))-METHYLTRANSFERASE RLMD"/>
    <property type="match status" value="1"/>
</dbReference>
<dbReference type="PANTHER" id="PTHR11061">
    <property type="entry name" value="RNA M5U METHYLTRANSFERASE"/>
    <property type="match status" value="1"/>
</dbReference>
<dbReference type="Pfam" id="PF01938">
    <property type="entry name" value="TRAM"/>
    <property type="match status" value="1"/>
</dbReference>
<dbReference type="Pfam" id="PF05958">
    <property type="entry name" value="tRNA_U5-meth_tr"/>
    <property type="match status" value="1"/>
</dbReference>
<dbReference type="SUPFAM" id="SSF50249">
    <property type="entry name" value="Nucleic acid-binding proteins"/>
    <property type="match status" value="1"/>
</dbReference>
<dbReference type="SUPFAM" id="SSF53335">
    <property type="entry name" value="S-adenosyl-L-methionine-dependent methyltransferases"/>
    <property type="match status" value="1"/>
</dbReference>
<dbReference type="PROSITE" id="PS51687">
    <property type="entry name" value="SAM_MT_RNA_M5U"/>
    <property type="match status" value="1"/>
</dbReference>
<dbReference type="PROSITE" id="PS50926">
    <property type="entry name" value="TRAM"/>
    <property type="match status" value="1"/>
</dbReference>
<dbReference type="PROSITE" id="PS01231">
    <property type="entry name" value="TRMA_2"/>
    <property type="match status" value="1"/>
</dbReference>
<sequence length="449" mass="50863">MGRSRYHNKLKEGIFEAEITALSHDGRGIAKVDGKTTFIPFTLPGEVVKFEYTFTKAKFDEAKVVEYVKKSLNRVNPPCDHFQICGGCSLQHMSTDAQIEHKQQTLINQLKYIGNGVEPENILPPLRTSNTEGYRNKARLGVRYVSKKGKILVGFRERNGRFLADIDKCIVLNPLVGDKITEISSFIETLSIYQHIAQLEIAIDDTRPAMIVRHLEPFTNEDLEKLRSFAQENNYWIYLQSKGPDTIFRLYPQGDVEPKKLSYQPAAGIDIGFEPNDFTQVNNDINKKMIKRAIELLDISENDSIIDLFCGLGNFTLPISQHAKTVIGVEGEPTMVKRAKETADNNNITNVNFYAANLFESFEDKEWFNNFEYNKMLLDPPRAGAQEVCNNIEKFNVKRIVYVSCDTAALARDAGILVNTKGYKLISAGVMDMFPHTMHVESIAVFEKI</sequence>
<evidence type="ECO:0000255" key="1">
    <source>
        <dbReference type="HAMAP-Rule" id="MF_01010"/>
    </source>
</evidence>
<name>RLMD_FRATO</name>
<proteinExistence type="inferred from homology"/>
<feature type="chain" id="PRO_0000282042" description="23S rRNA (uracil(1939)-C(5))-methyltransferase RlmD">
    <location>
        <begin position="1"/>
        <end position="449"/>
    </location>
</feature>
<feature type="domain" description="TRAM" evidence="1">
    <location>
        <begin position="1"/>
        <end position="66"/>
    </location>
</feature>
<feature type="active site" description="Nucleophile" evidence="1">
    <location>
        <position position="405"/>
    </location>
</feature>
<feature type="binding site" evidence="1">
    <location>
        <position position="79"/>
    </location>
    <ligand>
        <name>[4Fe-4S] cluster</name>
        <dbReference type="ChEBI" id="CHEBI:49883"/>
    </ligand>
</feature>
<feature type="binding site" evidence="1">
    <location>
        <position position="85"/>
    </location>
    <ligand>
        <name>[4Fe-4S] cluster</name>
        <dbReference type="ChEBI" id="CHEBI:49883"/>
    </ligand>
</feature>
<feature type="binding site" evidence="1">
    <location>
        <position position="88"/>
    </location>
    <ligand>
        <name>[4Fe-4S] cluster</name>
        <dbReference type="ChEBI" id="CHEBI:49883"/>
    </ligand>
</feature>
<feature type="binding site" evidence="1">
    <location>
        <position position="169"/>
    </location>
    <ligand>
        <name>[4Fe-4S] cluster</name>
        <dbReference type="ChEBI" id="CHEBI:49883"/>
    </ligand>
</feature>
<feature type="binding site" evidence="1">
    <location>
        <position position="280"/>
    </location>
    <ligand>
        <name>S-adenosyl-L-methionine</name>
        <dbReference type="ChEBI" id="CHEBI:59789"/>
    </ligand>
</feature>
<feature type="binding site" evidence="1">
    <location>
        <position position="309"/>
    </location>
    <ligand>
        <name>S-adenosyl-L-methionine</name>
        <dbReference type="ChEBI" id="CHEBI:59789"/>
    </ligand>
</feature>
<feature type="binding site" evidence="1">
    <location>
        <position position="314"/>
    </location>
    <ligand>
        <name>S-adenosyl-L-methionine</name>
        <dbReference type="ChEBI" id="CHEBI:59789"/>
    </ligand>
</feature>
<feature type="binding site" evidence="1">
    <location>
        <position position="330"/>
    </location>
    <ligand>
        <name>S-adenosyl-L-methionine</name>
        <dbReference type="ChEBI" id="CHEBI:59789"/>
    </ligand>
</feature>
<feature type="binding site" evidence="1">
    <location>
        <position position="357"/>
    </location>
    <ligand>
        <name>S-adenosyl-L-methionine</name>
        <dbReference type="ChEBI" id="CHEBI:59789"/>
    </ligand>
</feature>
<feature type="binding site" evidence="1">
    <location>
        <position position="379"/>
    </location>
    <ligand>
        <name>S-adenosyl-L-methionine</name>
        <dbReference type="ChEBI" id="CHEBI:59789"/>
    </ligand>
</feature>
<keyword id="KW-0004">4Fe-4S</keyword>
<keyword id="KW-0408">Iron</keyword>
<keyword id="KW-0411">Iron-sulfur</keyword>
<keyword id="KW-0479">Metal-binding</keyword>
<keyword id="KW-0489">Methyltransferase</keyword>
<keyword id="KW-0698">rRNA processing</keyword>
<keyword id="KW-0949">S-adenosyl-L-methionine</keyword>
<keyword id="KW-0808">Transferase</keyword>
<gene>
    <name evidence="1" type="primary">rlmD</name>
    <name type="synonym">rumA</name>
    <name type="ordered locus">FTH_1481</name>
</gene>
<organism>
    <name type="scientific">Francisella tularensis subsp. holarctica (strain OSU18)</name>
    <dbReference type="NCBI Taxonomy" id="393011"/>
    <lineage>
        <taxon>Bacteria</taxon>
        <taxon>Pseudomonadati</taxon>
        <taxon>Pseudomonadota</taxon>
        <taxon>Gammaproteobacteria</taxon>
        <taxon>Thiotrichales</taxon>
        <taxon>Francisellaceae</taxon>
        <taxon>Francisella</taxon>
    </lineage>
</organism>
<comment type="function">
    <text evidence="1">Catalyzes the formation of 5-methyl-uridine at position 1939 (m5U1939) in 23S rRNA.</text>
</comment>
<comment type="catalytic activity">
    <reaction evidence="1">
        <text>uridine(1939) in 23S rRNA + S-adenosyl-L-methionine = 5-methyluridine(1939) in 23S rRNA + S-adenosyl-L-homocysteine + H(+)</text>
        <dbReference type="Rhea" id="RHEA:42908"/>
        <dbReference type="Rhea" id="RHEA-COMP:10278"/>
        <dbReference type="Rhea" id="RHEA-COMP:10279"/>
        <dbReference type="ChEBI" id="CHEBI:15378"/>
        <dbReference type="ChEBI" id="CHEBI:57856"/>
        <dbReference type="ChEBI" id="CHEBI:59789"/>
        <dbReference type="ChEBI" id="CHEBI:65315"/>
        <dbReference type="ChEBI" id="CHEBI:74447"/>
        <dbReference type="EC" id="2.1.1.190"/>
    </reaction>
</comment>
<comment type="similarity">
    <text evidence="1">Belongs to the class I-like SAM-binding methyltransferase superfamily. RNA M5U methyltransferase family. RlmD subfamily.</text>
</comment>
<reference key="1">
    <citation type="journal article" date="2006" name="J. Bacteriol.">
        <title>Chromosome rearrangement and diversification of Francisella tularensis revealed by the type B (OSU18) genome sequence.</title>
        <authorList>
            <person name="Petrosino J.F."/>
            <person name="Xiang Q."/>
            <person name="Karpathy S.E."/>
            <person name="Jiang H."/>
            <person name="Yerrapragada S."/>
            <person name="Liu Y."/>
            <person name="Gioia J."/>
            <person name="Hemphill L."/>
            <person name="Gonzalez A."/>
            <person name="Raghavan T.M."/>
            <person name="Uzman A."/>
            <person name="Fox G.E."/>
            <person name="Highlander S."/>
            <person name="Reichard M."/>
            <person name="Morton R.J."/>
            <person name="Clinkenbeard K.D."/>
            <person name="Weinstock G.M."/>
        </authorList>
    </citation>
    <scope>NUCLEOTIDE SEQUENCE [LARGE SCALE GENOMIC DNA]</scope>
    <source>
        <strain>OSU18</strain>
    </source>
</reference>
<accession>Q0BKU7</accession>
<protein>
    <recommendedName>
        <fullName evidence="1">23S rRNA (uracil(1939)-C(5))-methyltransferase RlmD</fullName>
        <ecNumber evidence="1">2.1.1.190</ecNumber>
    </recommendedName>
    <alternativeName>
        <fullName evidence="1">23S rRNA(m5U1939)-methyltransferase</fullName>
    </alternativeName>
</protein>